<proteinExistence type="inferred from homology"/>
<name>RLMN3_OPITP</name>
<keyword id="KW-0004">4Fe-4S</keyword>
<keyword id="KW-0963">Cytoplasm</keyword>
<keyword id="KW-1015">Disulfide bond</keyword>
<keyword id="KW-0408">Iron</keyword>
<keyword id="KW-0411">Iron-sulfur</keyword>
<keyword id="KW-0479">Metal-binding</keyword>
<keyword id="KW-0489">Methyltransferase</keyword>
<keyword id="KW-1185">Reference proteome</keyword>
<keyword id="KW-0698">rRNA processing</keyword>
<keyword id="KW-0949">S-adenosyl-L-methionine</keyword>
<keyword id="KW-0808">Transferase</keyword>
<keyword id="KW-0819">tRNA processing</keyword>
<gene>
    <name evidence="1" type="primary">rlmN3</name>
    <name type="ordered locus">Oter_4182</name>
</gene>
<protein>
    <recommendedName>
        <fullName evidence="1">Probable dual-specificity RNA methyltransferase RlmN 3</fullName>
        <ecNumber evidence="1">2.1.1.192</ecNumber>
    </recommendedName>
    <alternativeName>
        <fullName evidence="1">23S rRNA (adenine(2503)-C(2))-methyltransferase 3</fullName>
    </alternativeName>
    <alternativeName>
        <fullName evidence="1">23S rRNA m2A2503 methyltransferase 3</fullName>
    </alternativeName>
    <alternativeName>
        <fullName evidence="1">Ribosomal RNA large subunit methyltransferase N 3</fullName>
    </alternativeName>
    <alternativeName>
        <fullName evidence="1">tRNA (adenine(37)-C(2))-methyltransferase 3</fullName>
    </alternativeName>
    <alternativeName>
        <fullName evidence="1">tRNA m2A37 methyltransferase 3</fullName>
    </alternativeName>
</protein>
<accession>B2A0B9</accession>
<reference key="1">
    <citation type="journal article" date="2011" name="J. Bacteriol.">
        <title>Genome sequence of the verrucomicrobium Opitutus terrae PB90-1, an abundant inhabitant of rice paddy soil ecosystems.</title>
        <authorList>
            <person name="van Passel M.W."/>
            <person name="Kant R."/>
            <person name="Palva A."/>
            <person name="Copeland A."/>
            <person name="Lucas S."/>
            <person name="Lapidus A."/>
            <person name="Glavina del Rio T."/>
            <person name="Pitluck S."/>
            <person name="Goltsman E."/>
            <person name="Clum A."/>
            <person name="Sun H."/>
            <person name="Schmutz J."/>
            <person name="Larimer F.W."/>
            <person name="Land M.L."/>
            <person name="Hauser L."/>
            <person name="Kyrpides N."/>
            <person name="Mikhailova N."/>
            <person name="Richardson P.P."/>
            <person name="Janssen P.H."/>
            <person name="de Vos W.M."/>
            <person name="Smidt H."/>
        </authorList>
    </citation>
    <scope>NUCLEOTIDE SEQUENCE [LARGE SCALE GENOMIC DNA]</scope>
    <source>
        <strain>DSM 11246 / JCM 15787 / PB90-1</strain>
    </source>
</reference>
<feature type="chain" id="PRO_0000350296" description="Probable dual-specificity RNA methyltransferase RlmN 3">
    <location>
        <begin position="1"/>
        <end position="374"/>
    </location>
</feature>
<feature type="domain" description="Radical SAM core" evidence="2">
    <location>
        <begin position="110"/>
        <end position="350"/>
    </location>
</feature>
<feature type="active site" description="Proton acceptor" evidence="1">
    <location>
        <position position="96"/>
    </location>
</feature>
<feature type="active site" description="S-methylcysteine intermediate" evidence="1">
    <location>
        <position position="355"/>
    </location>
</feature>
<feature type="binding site" evidence="1">
    <location>
        <position position="124"/>
    </location>
    <ligand>
        <name>[4Fe-4S] cluster</name>
        <dbReference type="ChEBI" id="CHEBI:49883"/>
        <note>4Fe-4S-S-AdoMet</note>
    </ligand>
</feature>
<feature type="binding site" evidence="1">
    <location>
        <position position="128"/>
    </location>
    <ligand>
        <name>[4Fe-4S] cluster</name>
        <dbReference type="ChEBI" id="CHEBI:49883"/>
        <note>4Fe-4S-S-AdoMet</note>
    </ligand>
</feature>
<feature type="binding site" evidence="1">
    <location>
        <position position="131"/>
    </location>
    <ligand>
        <name>[4Fe-4S] cluster</name>
        <dbReference type="ChEBI" id="CHEBI:49883"/>
        <note>4Fe-4S-S-AdoMet</note>
    </ligand>
</feature>
<feature type="binding site" evidence="1">
    <location>
        <begin position="181"/>
        <end position="182"/>
    </location>
    <ligand>
        <name>S-adenosyl-L-methionine</name>
        <dbReference type="ChEBI" id="CHEBI:59789"/>
    </ligand>
</feature>
<feature type="binding site" evidence="1">
    <location>
        <position position="213"/>
    </location>
    <ligand>
        <name>S-adenosyl-L-methionine</name>
        <dbReference type="ChEBI" id="CHEBI:59789"/>
    </ligand>
</feature>
<feature type="binding site" evidence="1">
    <location>
        <begin position="236"/>
        <end position="238"/>
    </location>
    <ligand>
        <name>S-adenosyl-L-methionine</name>
        <dbReference type="ChEBI" id="CHEBI:59789"/>
    </ligand>
</feature>
<feature type="binding site" evidence="1">
    <location>
        <position position="312"/>
    </location>
    <ligand>
        <name>S-adenosyl-L-methionine</name>
        <dbReference type="ChEBI" id="CHEBI:59789"/>
    </ligand>
</feature>
<feature type="disulfide bond" description="(transient)" evidence="1">
    <location>
        <begin position="117"/>
        <end position="355"/>
    </location>
</feature>
<comment type="function">
    <text evidence="1">Specifically methylates position 2 of adenine 2503 in 23S rRNA and position 2 of adenine 37 in tRNAs.</text>
</comment>
<comment type="catalytic activity">
    <reaction evidence="1">
        <text>adenosine(2503) in 23S rRNA + 2 reduced [2Fe-2S]-[ferredoxin] + 2 S-adenosyl-L-methionine = 2-methyladenosine(2503) in 23S rRNA + 5'-deoxyadenosine + L-methionine + 2 oxidized [2Fe-2S]-[ferredoxin] + S-adenosyl-L-homocysteine</text>
        <dbReference type="Rhea" id="RHEA:42916"/>
        <dbReference type="Rhea" id="RHEA-COMP:10000"/>
        <dbReference type="Rhea" id="RHEA-COMP:10001"/>
        <dbReference type="Rhea" id="RHEA-COMP:10152"/>
        <dbReference type="Rhea" id="RHEA-COMP:10282"/>
        <dbReference type="ChEBI" id="CHEBI:17319"/>
        <dbReference type="ChEBI" id="CHEBI:33737"/>
        <dbReference type="ChEBI" id="CHEBI:33738"/>
        <dbReference type="ChEBI" id="CHEBI:57844"/>
        <dbReference type="ChEBI" id="CHEBI:57856"/>
        <dbReference type="ChEBI" id="CHEBI:59789"/>
        <dbReference type="ChEBI" id="CHEBI:74411"/>
        <dbReference type="ChEBI" id="CHEBI:74497"/>
        <dbReference type="EC" id="2.1.1.192"/>
    </reaction>
</comment>
<comment type="catalytic activity">
    <reaction evidence="1">
        <text>adenosine(37) in tRNA + 2 reduced [2Fe-2S]-[ferredoxin] + 2 S-adenosyl-L-methionine = 2-methyladenosine(37) in tRNA + 5'-deoxyadenosine + L-methionine + 2 oxidized [2Fe-2S]-[ferredoxin] + S-adenosyl-L-homocysteine</text>
        <dbReference type="Rhea" id="RHEA:43332"/>
        <dbReference type="Rhea" id="RHEA-COMP:10000"/>
        <dbReference type="Rhea" id="RHEA-COMP:10001"/>
        <dbReference type="Rhea" id="RHEA-COMP:10162"/>
        <dbReference type="Rhea" id="RHEA-COMP:10485"/>
        <dbReference type="ChEBI" id="CHEBI:17319"/>
        <dbReference type="ChEBI" id="CHEBI:33737"/>
        <dbReference type="ChEBI" id="CHEBI:33738"/>
        <dbReference type="ChEBI" id="CHEBI:57844"/>
        <dbReference type="ChEBI" id="CHEBI:57856"/>
        <dbReference type="ChEBI" id="CHEBI:59789"/>
        <dbReference type="ChEBI" id="CHEBI:74411"/>
        <dbReference type="ChEBI" id="CHEBI:74497"/>
        <dbReference type="EC" id="2.1.1.192"/>
    </reaction>
</comment>
<comment type="cofactor">
    <cofactor evidence="1">
        <name>[4Fe-4S] cluster</name>
        <dbReference type="ChEBI" id="CHEBI:49883"/>
    </cofactor>
    <text evidence="1">Binds 1 [4Fe-4S] cluster. The cluster is coordinated with 3 cysteines and an exchangeable S-adenosyl-L-methionine.</text>
</comment>
<comment type="subcellular location">
    <subcellularLocation>
        <location evidence="1">Cytoplasm</location>
    </subcellularLocation>
</comment>
<comment type="miscellaneous">
    <text evidence="1">Reaction proceeds by a ping-pong mechanism involving intermediate methylation of a conserved cysteine residue.</text>
</comment>
<comment type="similarity">
    <text evidence="1">Belongs to the radical SAM superfamily. RlmN family.</text>
</comment>
<sequence length="374" mass="41451">MKFTPAKPPLTGETLESLTARLRERGEPAFRASQILDWVYKKRARSWDGMTNLPKPLRTWLDDTFDLMPATLVLNKQSADVTDKLLLELRDGSLIETVIIRAPQEGVGQDHSRKTICISTQVGCAMGCVFCASGLAGLKRDLSAGEIVAQLLQVCYREDALTPRAHMELASFDNIVVMGMGEPLANYDALIRALTILNADWGLGFGARRITVSTSGLVPKILQLADEPLGFRLAISLHGATDEVREKIMPVNKAFPLAKLLPAVKAFSEKHGRMITLEFILIDGVNDSLEQAEKLRDIALDLHAHVNLIPYNTVEGLAWKRPSITRQERFADVLRARRVSVTLRREKGHDIDAACGQLRLKTEKERQVLAAAKT</sequence>
<organism>
    <name type="scientific">Opitutus terrae (strain DSM 11246 / JCM 15787 / PB90-1)</name>
    <dbReference type="NCBI Taxonomy" id="452637"/>
    <lineage>
        <taxon>Bacteria</taxon>
        <taxon>Pseudomonadati</taxon>
        <taxon>Verrucomicrobiota</taxon>
        <taxon>Opitutia</taxon>
        <taxon>Opitutales</taxon>
        <taxon>Opitutaceae</taxon>
        <taxon>Opitutus</taxon>
    </lineage>
</organism>
<dbReference type="EC" id="2.1.1.192" evidence="1"/>
<dbReference type="EMBL" id="CP001032">
    <property type="protein sequence ID" value="ACB77455.1"/>
    <property type="molecule type" value="Genomic_DNA"/>
</dbReference>
<dbReference type="RefSeq" id="WP_012376983.1">
    <property type="nucleotide sequence ID" value="NC_010571.1"/>
</dbReference>
<dbReference type="SMR" id="B2A0B9"/>
<dbReference type="STRING" id="452637.Oter_4182"/>
<dbReference type="KEGG" id="ote:Oter_4182"/>
<dbReference type="eggNOG" id="COG0820">
    <property type="taxonomic scope" value="Bacteria"/>
</dbReference>
<dbReference type="HOGENOM" id="CLU_029101_0_1_0"/>
<dbReference type="OrthoDB" id="9793973at2"/>
<dbReference type="Proteomes" id="UP000007013">
    <property type="component" value="Chromosome"/>
</dbReference>
<dbReference type="GO" id="GO:0005737">
    <property type="term" value="C:cytoplasm"/>
    <property type="evidence" value="ECO:0007669"/>
    <property type="project" value="UniProtKB-SubCell"/>
</dbReference>
<dbReference type="GO" id="GO:0051539">
    <property type="term" value="F:4 iron, 4 sulfur cluster binding"/>
    <property type="evidence" value="ECO:0007669"/>
    <property type="project" value="UniProtKB-UniRule"/>
</dbReference>
<dbReference type="GO" id="GO:0046872">
    <property type="term" value="F:metal ion binding"/>
    <property type="evidence" value="ECO:0007669"/>
    <property type="project" value="UniProtKB-KW"/>
</dbReference>
<dbReference type="GO" id="GO:0070040">
    <property type="term" value="F:rRNA (adenine(2503)-C2-)-methyltransferase activity"/>
    <property type="evidence" value="ECO:0007669"/>
    <property type="project" value="UniProtKB-UniRule"/>
</dbReference>
<dbReference type="GO" id="GO:0019843">
    <property type="term" value="F:rRNA binding"/>
    <property type="evidence" value="ECO:0007669"/>
    <property type="project" value="UniProtKB-UniRule"/>
</dbReference>
<dbReference type="GO" id="GO:0002935">
    <property type="term" value="F:tRNA (adenine(37)-C2)-methyltransferase activity"/>
    <property type="evidence" value="ECO:0007669"/>
    <property type="project" value="UniProtKB-UniRule"/>
</dbReference>
<dbReference type="GO" id="GO:0000049">
    <property type="term" value="F:tRNA binding"/>
    <property type="evidence" value="ECO:0007669"/>
    <property type="project" value="UniProtKB-UniRule"/>
</dbReference>
<dbReference type="GO" id="GO:0070475">
    <property type="term" value="P:rRNA base methylation"/>
    <property type="evidence" value="ECO:0007669"/>
    <property type="project" value="UniProtKB-UniRule"/>
</dbReference>
<dbReference type="GO" id="GO:0030488">
    <property type="term" value="P:tRNA methylation"/>
    <property type="evidence" value="ECO:0007669"/>
    <property type="project" value="UniProtKB-UniRule"/>
</dbReference>
<dbReference type="CDD" id="cd01335">
    <property type="entry name" value="Radical_SAM"/>
    <property type="match status" value="1"/>
</dbReference>
<dbReference type="FunFam" id="3.20.20.70:FF:000014">
    <property type="entry name" value="Probable dual-specificity RNA methyltransferase RlmN"/>
    <property type="match status" value="1"/>
</dbReference>
<dbReference type="Gene3D" id="1.10.150.530">
    <property type="match status" value="1"/>
</dbReference>
<dbReference type="Gene3D" id="3.20.20.70">
    <property type="entry name" value="Aldolase class I"/>
    <property type="match status" value="1"/>
</dbReference>
<dbReference type="HAMAP" id="MF_01849">
    <property type="entry name" value="RNA_methyltr_RlmN"/>
    <property type="match status" value="1"/>
</dbReference>
<dbReference type="InterPro" id="IPR013785">
    <property type="entry name" value="Aldolase_TIM"/>
</dbReference>
<dbReference type="InterPro" id="IPR040072">
    <property type="entry name" value="Methyltransferase_A"/>
</dbReference>
<dbReference type="InterPro" id="IPR048641">
    <property type="entry name" value="RlmN_N"/>
</dbReference>
<dbReference type="InterPro" id="IPR027492">
    <property type="entry name" value="RNA_MTrfase_RlmN"/>
</dbReference>
<dbReference type="InterPro" id="IPR004383">
    <property type="entry name" value="rRNA_lsu_MTrfase_RlmN/Cfr"/>
</dbReference>
<dbReference type="InterPro" id="IPR007197">
    <property type="entry name" value="rSAM"/>
</dbReference>
<dbReference type="NCBIfam" id="TIGR00048">
    <property type="entry name" value="rRNA_mod_RlmN"/>
    <property type="match status" value="1"/>
</dbReference>
<dbReference type="PANTHER" id="PTHR30544">
    <property type="entry name" value="23S RRNA METHYLTRANSFERASE"/>
    <property type="match status" value="1"/>
</dbReference>
<dbReference type="PANTHER" id="PTHR30544:SF5">
    <property type="entry name" value="RADICAL SAM CORE DOMAIN-CONTAINING PROTEIN"/>
    <property type="match status" value="1"/>
</dbReference>
<dbReference type="Pfam" id="PF04055">
    <property type="entry name" value="Radical_SAM"/>
    <property type="match status" value="1"/>
</dbReference>
<dbReference type="Pfam" id="PF21016">
    <property type="entry name" value="RlmN_N"/>
    <property type="match status" value="1"/>
</dbReference>
<dbReference type="PIRSF" id="PIRSF006004">
    <property type="entry name" value="CHP00048"/>
    <property type="match status" value="1"/>
</dbReference>
<dbReference type="SFLD" id="SFLDF00275">
    <property type="entry name" value="adenosine_C2_methyltransferase"/>
    <property type="match status" value="1"/>
</dbReference>
<dbReference type="SFLD" id="SFLDS00029">
    <property type="entry name" value="Radical_SAM"/>
    <property type="match status" value="1"/>
</dbReference>
<dbReference type="SUPFAM" id="SSF102114">
    <property type="entry name" value="Radical SAM enzymes"/>
    <property type="match status" value="1"/>
</dbReference>
<dbReference type="PROSITE" id="PS51918">
    <property type="entry name" value="RADICAL_SAM"/>
    <property type="match status" value="1"/>
</dbReference>
<evidence type="ECO:0000255" key="1">
    <source>
        <dbReference type="HAMAP-Rule" id="MF_01849"/>
    </source>
</evidence>
<evidence type="ECO:0000255" key="2">
    <source>
        <dbReference type="PROSITE-ProRule" id="PRU01266"/>
    </source>
</evidence>